<name>CLK3_HUMAN</name>
<protein>
    <recommendedName>
        <fullName>Dual specificity protein kinase CLK3</fullName>
        <ecNumber>2.7.12.1</ecNumber>
    </recommendedName>
    <alternativeName>
        <fullName>CDC-like kinase 3</fullName>
    </alternativeName>
</protein>
<reference key="1">
    <citation type="journal article" date="1994" name="J. Mol. Biol.">
        <title>Characterization by cDNA cloning of two new human protein kinases. Evidence by sequence comparison of a new family of mammalian protein kinases.</title>
        <authorList>
            <person name="Hanes J.J."/>
            <person name="der Kammer H."/>
            <person name="Klaudiny J.J."/>
            <person name="Scheit K.H."/>
        </authorList>
    </citation>
    <scope>NUCLEOTIDE SEQUENCE [MRNA] (ISOFORMS 1 AND 2)</scope>
</reference>
<reference key="2">
    <citation type="submission" date="2003-05" db="EMBL/GenBank/DDBJ databases">
        <title>Cloning of human full-length CDSs in BD Creator(TM) system donor vector.</title>
        <authorList>
            <person name="Kalnine N."/>
            <person name="Chen X."/>
            <person name="Rolfs A."/>
            <person name="Halleck A."/>
            <person name="Hines L."/>
            <person name="Eisenstein S."/>
            <person name="Koundinya M."/>
            <person name="Raphael J."/>
            <person name="Moreira D."/>
            <person name="Kelley T."/>
            <person name="LaBaer J."/>
            <person name="Lin Y."/>
            <person name="Phelan M."/>
            <person name="Farmer A."/>
        </authorList>
    </citation>
    <scope>NUCLEOTIDE SEQUENCE [LARGE SCALE MRNA] (ISOFORM 1)</scope>
</reference>
<reference key="3">
    <citation type="journal article" date="2006" name="Nature">
        <title>Analysis of the DNA sequence and duplication history of human chromosome 15.</title>
        <authorList>
            <person name="Zody M.C."/>
            <person name="Garber M."/>
            <person name="Sharpe T."/>
            <person name="Young S.K."/>
            <person name="Rowen L."/>
            <person name="O'Neill K."/>
            <person name="Whittaker C.A."/>
            <person name="Kamal M."/>
            <person name="Chang J.L."/>
            <person name="Cuomo C.A."/>
            <person name="Dewar K."/>
            <person name="FitzGerald M.G."/>
            <person name="Kodira C.D."/>
            <person name="Madan A."/>
            <person name="Qin S."/>
            <person name="Yang X."/>
            <person name="Abbasi N."/>
            <person name="Abouelleil A."/>
            <person name="Arachchi H.M."/>
            <person name="Baradarani L."/>
            <person name="Birditt B."/>
            <person name="Bloom S."/>
            <person name="Bloom T."/>
            <person name="Borowsky M.L."/>
            <person name="Burke J."/>
            <person name="Butler J."/>
            <person name="Cook A."/>
            <person name="DeArellano K."/>
            <person name="DeCaprio D."/>
            <person name="Dorris L. III"/>
            <person name="Dors M."/>
            <person name="Eichler E.E."/>
            <person name="Engels R."/>
            <person name="Fahey J."/>
            <person name="Fleetwood P."/>
            <person name="Friedman C."/>
            <person name="Gearin G."/>
            <person name="Hall J.L."/>
            <person name="Hensley G."/>
            <person name="Johnson E."/>
            <person name="Jones C."/>
            <person name="Kamat A."/>
            <person name="Kaur A."/>
            <person name="Locke D.P."/>
            <person name="Madan A."/>
            <person name="Munson G."/>
            <person name="Jaffe D.B."/>
            <person name="Lui A."/>
            <person name="Macdonald P."/>
            <person name="Mauceli E."/>
            <person name="Naylor J.W."/>
            <person name="Nesbitt R."/>
            <person name="Nicol R."/>
            <person name="O'Leary S.B."/>
            <person name="Ratcliffe A."/>
            <person name="Rounsley S."/>
            <person name="She X."/>
            <person name="Sneddon K.M.B."/>
            <person name="Stewart S."/>
            <person name="Sougnez C."/>
            <person name="Stone S.M."/>
            <person name="Topham K."/>
            <person name="Vincent D."/>
            <person name="Wang S."/>
            <person name="Zimmer A.R."/>
            <person name="Birren B.W."/>
            <person name="Hood L."/>
            <person name="Lander E.S."/>
            <person name="Nusbaum C."/>
        </authorList>
    </citation>
    <scope>NUCLEOTIDE SEQUENCE [LARGE SCALE GENOMIC DNA]</scope>
</reference>
<reference key="4">
    <citation type="submission" date="2005-09" db="EMBL/GenBank/DDBJ databases">
        <authorList>
            <person name="Mural R.J."/>
            <person name="Istrail S."/>
            <person name="Sutton G.G."/>
            <person name="Florea L."/>
            <person name="Halpern A.L."/>
            <person name="Mobarry C.M."/>
            <person name="Lippert R."/>
            <person name="Walenz B."/>
            <person name="Shatkay H."/>
            <person name="Dew I."/>
            <person name="Miller J.R."/>
            <person name="Flanigan M.J."/>
            <person name="Edwards N.J."/>
            <person name="Bolanos R."/>
            <person name="Fasulo D."/>
            <person name="Halldorsson B.V."/>
            <person name="Hannenhalli S."/>
            <person name="Turner R."/>
            <person name="Yooseph S."/>
            <person name="Lu F."/>
            <person name="Nusskern D.R."/>
            <person name="Shue B.C."/>
            <person name="Zheng X.H."/>
            <person name="Zhong F."/>
            <person name="Delcher A.L."/>
            <person name="Huson D.H."/>
            <person name="Kravitz S.A."/>
            <person name="Mouchard L."/>
            <person name="Reinert K."/>
            <person name="Remington K.A."/>
            <person name="Clark A.G."/>
            <person name="Waterman M.S."/>
            <person name="Eichler E.E."/>
            <person name="Adams M.D."/>
            <person name="Hunkapiller M.W."/>
            <person name="Myers E.W."/>
            <person name="Venter J.C."/>
        </authorList>
    </citation>
    <scope>NUCLEOTIDE SEQUENCE [LARGE SCALE GENOMIC DNA]</scope>
</reference>
<reference key="5">
    <citation type="journal article" date="2004" name="Genome Res.">
        <title>The status, quality, and expansion of the NIH full-length cDNA project: the Mammalian Gene Collection (MGC).</title>
        <authorList>
            <consortium name="The MGC Project Team"/>
        </authorList>
    </citation>
    <scope>NUCLEOTIDE SEQUENCE [LARGE SCALE MRNA] (ISOFORMS 1 AND 3)</scope>
    <source>
        <tissue>Cervix</tissue>
        <tissue>Placenta</tissue>
    </source>
</reference>
<reference key="6">
    <citation type="journal article" date="1998" name="Exp. Cell Res.">
        <title>The Clk2 and Clk3 dual-specificity protein kinases regulate the intranuclear distribution of SR proteins and influence pre-mRNA splicing.</title>
        <authorList>
            <person name="Duncan P.I."/>
            <person name="Stojdl D.F."/>
            <person name="Marius R.M."/>
            <person name="Scheit K.H."/>
            <person name="Bell J.C."/>
        </authorList>
    </citation>
    <scope>FUNCTION</scope>
    <scope>SUBCELLULAR LOCATION</scope>
    <scope>PHOSPHORYLATION</scope>
</reference>
<reference key="7">
    <citation type="journal article" date="2004" name="Genome Biol.">
        <title>An unappreciated role for RNA surveillance.</title>
        <authorList>
            <person name="Hillman R.T."/>
            <person name="Green R.E."/>
            <person name="Brenner S.E."/>
        </authorList>
    </citation>
    <scope>SPLICE ISOFORM(S) THAT ARE POTENTIAL NMD TARGET(S)</scope>
</reference>
<reference key="8">
    <citation type="journal article" date="2006" name="Cell">
        <title>Global, in vivo, and site-specific phosphorylation dynamics in signaling networks.</title>
        <authorList>
            <person name="Olsen J.V."/>
            <person name="Blagoev B."/>
            <person name="Gnad F."/>
            <person name="Macek B."/>
            <person name="Kumar C."/>
            <person name="Mortensen P."/>
            <person name="Mann M."/>
        </authorList>
    </citation>
    <scope>IDENTIFICATION BY MASS SPECTROMETRY [LARGE SCALE ANALYSIS]</scope>
    <source>
        <tissue>Cervix carcinoma</tissue>
    </source>
</reference>
<reference key="9">
    <citation type="journal article" date="2008" name="Mol. Cell">
        <title>Kinase-selective enrichment enables quantitative phosphoproteomics of the kinome across the cell cycle.</title>
        <authorList>
            <person name="Daub H."/>
            <person name="Olsen J.V."/>
            <person name="Bairlein M."/>
            <person name="Gnad F."/>
            <person name="Oppermann F.S."/>
            <person name="Korner R."/>
            <person name="Greff Z."/>
            <person name="Keri G."/>
            <person name="Stemmann O."/>
            <person name="Mann M."/>
        </authorList>
    </citation>
    <scope>PHOSPHORYLATION [LARGE SCALE ANALYSIS] AT SER-135</scope>
    <scope>IDENTIFICATION BY MASS SPECTROMETRY [LARGE SCALE ANALYSIS]</scope>
    <source>
        <tissue>Cervix carcinoma</tissue>
    </source>
</reference>
<reference key="10">
    <citation type="journal article" date="2008" name="Proc. Natl. Acad. Sci. U.S.A.">
        <title>A quantitative atlas of mitotic phosphorylation.</title>
        <authorList>
            <person name="Dephoure N."/>
            <person name="Zhou C."/>
            <person name="Villen J."/>
            <person name="Beausoleil S.A."/>
            <person name="Bakalarski C.E."/>
            <person name="Elledge S.J."/>
            <person name="Gygi S.P."/>
        </authorList>
    </citation>
    <scope>PHOSPHORYLATION [LARGE SCALE ANALYSIS] AT TYR-7; SER-9; SER-76 AND SER-78</scope>
    <scope>IDENTIFICATION BY MASS SPECTROMETRY [LARGE SCALE ANALYSIS]</scope>
    <source>
        <tissue>Cervix carcinoma</tissue>
    </source>
</reference>
<reference key="11">
    <citation type="journal article" date="2009" name="Circ. Res.">
        <title>Cdc2-like kinases and DNA topoisomerase I regulate alternative splicing of tissue factor in human endothelial cells.</title>
        <authorList>
            <person name="Eisenreich A."/>
            <person name="Bogdanov V.Y."/>
            <person name="Zakrzewicz A."/>
            <person name="Pries A."/>
            <person name="Antoniak S."/>
            <person name="Poller W."/>
            <person name="Schultheiss H.P."/>
            <person name="Rauch U."/>
        </authorList>
    </citation>
    <scope>FUNCTION</scope>
    <scope>ALTERNATIVE SPLICING</scope>
    <scope>TISSUE SPECIFICITY</scope>
</reference>
<reference key="12">
    <citation type="journal article" date="2009" name="Sci. Signal.">
        <title>Quantitative phosphoproteomic analysis of T cell receptor signaling reveals system-wide modulation of protein-protein interactions.</title>
        <authorList>
            <person name="Mayya V."/>
            <person name="Lundgren D.H."/>
            <person name="Hwang S.-I."/>
            <person name="Rezaul K."/>
            <person name="Wu L."/>
            <person name="Eng J.K."/>
            <person name="Rodionov V."/>
            <person name="Han D.K."/>
        </authorList>
    </citation>
    <scope>PHOSPHORYLATION [LARGE SCALE ANALYSIS] AT SER-9</scope>
    <scope>IDENTIFICATION BY MASS SPECTROMETRY [LARGE SCALE ANALYSIS]</scope>
    <source>
        <tissue>Leukemic T-cell</tissue>
    </source>
</reference>
<reference key="13">
    <citation type="journal article" date="2010" name="Sci. Signal.">
        <title>Quantitative phosphoproteomics reveals widespread full phosphorylation site occupancy during mitosis.</title>
        <authorList>
            <person name="Olsen J.V."/>
            <person name="Vermeulen M."/>
            <person name="Santamaria A."/>
            <person name="Kumar C."/>
            <person name="Miller M.L."/>
            <person name="Jensen L.J."/>
            <person name="Gnad F."/>
            <person name="Cox J."/>
            <person name="Jensen T.S."/>
            <person name="Nigg E.A."/>
            <person name="Brunak S."/>
            <person name="Mann M."/>
        </authorList>
    </citation>
    <scope>PHOSPHORYLATION [LARGE SCALE ANALYSIS] AT SER-67; SER-76 AND SER-78</scope>
    <scope>IDENTIFICATION BY MASS SPECTROMETRY [LARGE SCALE ANALYSIS]</scope>
    <source>
        <tissue>Cervix carcinoma</tissue>
    </source>
</reference>
<reference key="14">
    <citation type="journal article" date="2013" name="J. Proteome Res.">
        <title>Toward a comprehensive characterization of a human cancer cell phosphoproteome.</title>
        <authorList>
            <person name="Zhou H."/>
            <person name="Di Palma S."/>
            <person name="Preisinger C."/>
            <person name="Peng M."/>
            <person name="Polat A.N."/>
            <person name="Heck A.J."/>
            <person name="Mohammed S."/>
        </authorList>
    </citation>
    <scope>PHOSPHORYLATION [LARGE SCALE ANALYSIS] AT SER-9; SER-49; SER-51 AND SER-135</scope>
    <scope>IDENTIFICATION BY MASS SPECTROMETRY [LARGE SCALE ANALYSIS]</scope>
    <source>
        <tissue>Cervix carcinoma</tissue>
        <tissue>Erythroleukemia</tissue>
    </source>
</reference>
<reference key="15">
    <citation type="journal article" date="2014" name="J. Proteomics">
        <title>An enzyme assisted RP-RPLC approach for in-depth analysis of human liver phosphoproteome.</title>
        <authorList>
            <person name="Bian Y."/>
            <person name="Song C."/>
            <person name="Cheng K."/>
            <person name="Dong M."/>
            <person name="Wang F."/>
            <person name="Huang J."/>
            <person name="Sun D."/>
            <person name="Wang L."/>
            <person name="Ye M."/>
            <person name="Zou H."/>
        </authorList>
    </citation>
    <scope>PHOSPHORYLATION [LARGE SCALE ANALYSIS] AT SER-9</scope>
    <scope>IDENTIFICATION BY MASS SPECTROMETRY [LARGE SCALE ANALYSIS]</scope>
    <source>
        <tissue>Liver</tissue>
    </source>
</reference>
<reference key="16">
    <citation type="submission" date="2005-11" db="PDB data bank">
        <title>Crystal structure of CLK3.</title>
        <authorList>
            <person name="Papagrigoriou E."/>
            <person name="Rellos P."/>
            <person name="Das S."/>
            <person name="Ugochukwu E."/>
            <person name="Turnbull A."/>
            <person name="von Delft F."/>
            <person name="Bunkoczi G."/>
            <person name="Sobott F."/>
            <person name="Bullock A."/>
            <person name="Fedorov O."/>
            <person name="Gileadi C."/>
            <person name="Savitsky P."/>
            <person name="Edwards A."/>
            <person name="Aerrowsmith C."/>
            <person name="Weigel J."/>
            <person name="Sundstrom M."/>
            <person name="Knapp S."/>
        </authorList>
    </citation>
    <scope>X-RAY CRYSTALLOGRAPHY (1.53 ANGSTROMS) OF 136-490</scope>
</reference>
<reference key="17">
    <citation type="submission" date="2007-04" db="PDB data bank">
        <title>Crystal structure of the phosphorylated clk3.</title>
        <authorList>
            <consortium name="Structural genomics consortium (SGC)"/>
        </authorList>
    </citation>
    <scope>X-RAY CRYSTALLOGRAPHY (2.35 ANGSTROMS) OF 127-479</scope>
</reference>
<reference key="18">
    <citation type="journal article" date="2011" name="J. Med. Chem.">
        <title>Leucettines, a class of potent inhibitors of cdc2-like kinases and dual specificity, tyrosine phosphorylation regulated kinases derived from the marine sponge leucettamine B: modulation of alternative pre-RNA splicing.</title>
        <authorList>
            <person name="Debdab M."/>
            <person name="Carreaux F."/>
            <person name="Renault S."/>
            <person name="Soundararajan M."/>
            <person name="Fedorov O."/>
            <person name="Filippakopoulos P."/>
            <person name="Lozach O."/>
            <person name="Babault L."/>
            <person name="Tahtouh T."/>
            <person name="Baratte B."/>
            <person name="Ogawa Y."/>
            <person name="Hagiwara M."/>
            <person name="Eisenreich A."/>
            <person name="Rauch U."/>
            <person name="Knapp S."/>
            <person name="Meijer L."/>
            <person name="Bazureau J.P."/>
        </authorList>
    </citation>
    <scope>X-RAY CRYSTALLOGRAPHY (2.09 ANGSTROMS) OF 127-484 IN COMPLEX WITH LEUCETTINE L41</scope>
</reference>
<reference key="19">
    <citation type="journal article" date="2007" name="Nature">
        <title>Patterns of somatic mutation in human cancer genomes.</title>
        <authorList>
            <person name="Greenman C."/>
            <person name="Stephens P."/>
            <person name="Smith R."/>
            <person name="Dalgliesh G.L."/>
            <person name="Hunter C."/>
            <person name="Bignell G."/>
            <person name="Davies H."/>
            <person name="Teague J."/>
            <person name="Butler A."/>
            <person name="Stevens C."/>
            <person name="Edkins S."/>
            <person name="O'Meara S."/>
            <person name="Vastrik I."/>
            <person name="Schmidt E.E."/>
            <person name="Avis T."/>
            <person name="Barthorpe S."/>
            <person name="Bhamra G."/>
            <person name="Buck G."/>
            <person name="Choudhury B."/>
            <person name="Clements J."/>
            <person name="Cole J."/>
            <person name="Dicks E."/>
            <person name="Forbes S."/>
            <person name="Gray K."/>
            <person name="Halliday K."/>
            <person name="Harrison R."/>
            <person name="Hills K."/>
            <person name="Hinton J."/>
            <person name="Jenkinson A."/>
            <person name="Jones D."/>
            <person name="Menzies A."/>
            <person name="Mironenko T."/>
            <person name="Perry J."/>
            <person name="Raine K."/>
            <person name="Richardson D."/>
            <person name="Shepherd R."/>
            <person name="Small A."/>
            <person name="Tofts C."/>
            <person name="Varian J."/>
            <person name="Webb T."/>
            <person name="West S."/>
            <person name="Widaa S."/>
            <person name="Yates A."/>
            <person name="Cahill D.P."/>
            <person name="Louis D.N."/>
            <person name="Goldstraw P."/>
            <person name="Nicholson A.G."/>
            <person name="Brasseur F."/>
            <person name="Looijenga L."/>
            <person name="Weber B.L."/>
            <person name="Chiew Y.-E."/>
            <person name="DeFazio A."/>
            <person name="Greaves M.F."/>
            <person name="Green A.R."/>
            <person name="Campbell P."/>
            <person name="Birney E."/>
            <person name="Easton D.F."/>
            <person name="Chenevix-Trench G."/>
            <person name="Tan M.-H."/>
            <person name="Khoo S.K."/>
            <person name="Teh B.T."/>
            <person name="Yuen S.T."/>
            <person name="Leung S.Y."/>
            <person name="Wooster R."/>
            <person name="Futreal P.A."/>
            <person name="Stratton M.R."/>
        </authorList>
    </citation>
    <scope>VARIANTS [LARGE SCALE ANALYSIS] CYS-338; ARG-459 AND TRP-480</scope>
</reference>
<keyword id="KW-0002">3D-structure</keyword>
<keyword id="KW-0025">Alternative splicing</keyword>
<keyword id="KW-0067">ATP-binding</keyword>
<keyword id="KW-0963">Cytoplasm</keyword>
<keyword id="KW-0968">Cytoplasmic vesicle</keyword>
<keyword id="KW-0418">Kinase</keyword>
<keyword id="KW-0547">Nucleotide-binding</keyword>
<keyword id="KW-0539">Nucleus</keyword>
<keyword id="KW-0597">Phosphoprotein</keyword>
<keyword id="KW-1267">Proteomics identification</keyword>
<keyword id="KW-1185">Reference proteome</keyword>
<keyword id="KW-0723">Serine/threonine-protein kinase</keyword>
<keyword id="KW-0808">Transferase</keyword>
<keyword id="KW-0829">Tyrosine-protein kinase</keyword>
<gene>
    <name evidence="9" type="primary">CLK3</name>
</gene>
<evidence type="ECO:0000250" key="1"/>
<evidence type="ECO:0000255" key="2">
    <source>
        <dbReference type="PROSITE-ProRule" id="PRU00159"/>
    </source>
</evidence>
<evidence type="ECO:0000255" key="3">
    <source>
        <dbReference type="PROSITE-ProRule" id="PRU10027"/>
    </source>
</evidence>
<evidence type="ECO:0000256" key="4">
    <source>
        <dbReference type="SAM" id="MobiDB-lite"/>
    </source>
</evidence>
<evidence type="ECO:0000269" key="5">
    <source>
    </source>
</evidence>
<evidence type="ECO:0000269" key="6">
    <source>
    </source>
</evidence>
<evidence type="ECO:0000269" key="7">
    <source>
    </source>
</evidence>
<evidence type="ECO:0000305" key="8"/>
<evidence type="ECO:0000312" key="9">
    <source>
        <dbReference type="HGNC" id="HGNC:2071"/>
    </source>
</evidence>
<evidence type="ECO:0007744" key="10">
    <source>
    </source>
</evidence>
<evidence type="ECO:0007744" key="11">
    <source>
    </source>
</evidence>
<evidence type="ECO:0007744" key="12">
    <source>
    </source>
</evidence>
<evidence type="ECO:0007744" key="13">
    <source>
    </source>
</evidence>
<evidence type="ECO:0007744" key="14">
    <source>
    </source>
</evidence>
<evidence type="ECO:0007744" key="15">
    <source>
    </source>
</evidence>
<evidence type="ECO:0007829" key="16">
    <source>
        <dbReference type="PDB" id="2EXE"/>
    </source>
</evidence>
<evidence type="ECO:0007829" key="17">
    <source>
        <dbReference type="PDB" id="6FYR"/>
    </source>
</evidence>
<evidence type="ECO:0007829" key="18">
    <source>
        <dbReference type="PDB" id="6KHF"/>
    </source>
</evidence>
<evidence type="ECO:0007829" key="19">
    <source>
        <dbReference type="PDB" id="6RCT"/>
    </source>
</evidence>
<evidence type="ECO:0007829" key="20">
    <source>
        <dbReference type="PDB" id="6Z55"/>
    </source>
</evidence>
<accession>P49761</accession>
<accession>D3DW59</accession>
<accession>Q53Y48</accession>
<accession>Q9BRS3</accession>
<accession>Q9BUJ7</accession>
<proteinExistence type="evidence at protein level"/>
<dbReference type="EC" id="2.7.12.1"/>
<dbReference type="EMBL" id="L29220">
    <property type="protein sequence ID" value="AAA61483.1"/>
    <property type="molecule type" value="mRNA"/>
</dbReference>
<dbReference type="EMBL" id="L29217">
    <property type="protein sequence ID" value="AAA61484.1"/>
    <property type="molecule type" value="mRNA"/>
</dbReference>
<dbReference type="EMBL" id="BT006993">
    <property type="protein sequence ID" value="AAP35639.1"/>
    <property type="molecule type" value="mRNA"/>
</dbReference>
<dbReference type="EMBL" id="AC100835">
    <property type="status" value="NOT_ANNOTATED_CDS"/>
    <property type="molecule type" value="Genomic_DNA"/>
</dbReference>
<dbReference type="EMBL" id="CH471136">
    <property type="protein sequence ID" value="EAW99321.1"/>
    <property type="molecule type" value="Genomic_DNA"/>
</dbReference>
<dbReference type="EMBL" id="CH471136">
    <property type="protein sequence ID" value="EAW99322.1"/>
    <property type="molecule type" value="Genomic_DNA"/>
</dbReference>
<dbReference type="EMBL" id="BC002555">
    <property type="protein sequence ID" value="AAH02555.1"/>
    <property type="molecule type" value="mRNA"/>
</dbReference>
<dbReference type="EMBL" id="BC006103">
    <property type="protein sequence ID" value="AAH06103.1"/>
    <property type="molecule type" value="mRNA"/>
</dbReference>
<dbReference type="EMBL" id="BC019881">
    <property type="protein sequence ID" value="AAH19881.1"/>
    <property type="molecule type" value="mRNA"/>
</dbReference>
<dbReference type="CCDS" id="CCDS10265.1">
    <molecule id="P49761-1"/>
</dbReference>
<dbReference type="PIR" id="S53639">
    <property type="entry name" value="S53639"/>
</dbReference>
<dbReference type="PIR" id="S53640">
    <property type="entry name" value="S53640"/>
</dbReference>
<dbReference type="RefSeq" id="NP_001123500.2">
    <molecule id="P49761-1"/>
    <property type="nucleotide sequence ID" value="NM_001130028.2"/>
</dbReference>
<dbReference type="RefSeq" id="NP_003983.2">
    <molecule id="P49761-1"/>
    <property type="nucleotide sequence ID" value="NM_003992.5"/>
</dbReference>
<dbReference type="RefSeq" id="XP_016877398.1">
    <property type="nucleotide sequence ID" value="XM_017021909.1"/>
</dbReference>
<dbReference type="RefSeq" id="XP_016877399.1">
    <property type="nucleotide sequence ID" value="XM_017021910.1"/>
</dbReference>
<dbReference type="PDB" id="2EU9">
    <property type="method" value="X-ray"/>
    <property type="resolution" value="1.53 A"/>
    <property type="chains" value="A=136-490"/>
</dbReference>
<dbReference type="PDB" id="2EXE">
    <property type="method" value="X-ray"/>
    <property type="resolution" value="2.35 A"/>
    <property type="chains" value="A=127-483"/>
</dbReference>
<dbReference type="PDB" id="2WU6">
    <property type="method" value="X-ray"/>
    <property type="resolution" value="1.92 A"/>
    <property type="chains" value="A=127-484"/>
</dbReference>
<dbReference type="PDB" id="2WU7">
    <property type="method" value="X-ray"/>
    <property type="resolution" value="2.25 A"/>
    <property type="chains" value="A=127-484"/>
</dbReference>
<dbReference type="PDB" id="3RAW">
    <property type="method" value="X-ray"/>
    <property type="resolution" value="2.09 A"/>
    <property type="chains" value="A/B=127-484"/>
</dbReference>
<dbReference type="PDB" id="6FT7">
    <property type="method" value="X-ray"/>
    <property type="resolution" value="2.02 A"/>
    <property type="chains" value="A/B=127-484"/>
</dbReference>
<dbReference type="PDB" id="6FYP">
    <property type="method" value="X-ray"/>
    <property type="resolution" value="2.29 A"/>
    <property type="chains" value="A=127-484"/>
</dbReference>
<dbReference type="PDB" id="6FYR">
    <property type="method" value="X-ray"/>
    <property type="resolution" value="1.42 A"/>
    <property type="chains" value="A=127-484"/>
</dbReference>
<dbReference type="PDB" id="6KHF">
    <property type="method" value="X-ray"/>
    <property type="resolution" value="2.60 A"/>
    <property type="chains" value="A=1-490"/>
</dbReference>
<dbReference type="PDB" id="6RCT">
    <property type="method" value="X-ray"/>
    <property type="resolution" value="2.32 A"/>
    <property type="chains" value="A/B=127-484"/>
</dbReference>
<dbReference type="PDB" id="6YTW">
    <property type="method" value="X-ray"/>
    <property type="resolution" value="2.00 A"/>
    <property type="chains" value="A/B=127-484"/>
</dbReference>
<dbReference type="PDB" id="6YTY">
    <property type="method" value="X-ray"/>
    <property type="resolution" value="1.76 A"/>
    <property type="chains" value="A=127-484"/>
</dbReference>
<dbReference type="PDB" id="6YU1">
    <property type="method" value="X-ray"/>
    <property type="resolution" value="1.90 A"/>
    <property type="chains" value="a/c=127-484"/>
</dbReference>
<dbReference type="PDB" id="6Z2V">
    <property type="method" value="X-ray"/>
    <property type="resolution" value="2.60 A"/>
    <property type="chains" value="A=127-484"/>
</dbReference>
<dbReference type="PDB" id="6Z51">
    <property type="method" value="X-ray"/>
    <property type="resolution" value="1.92 A"/>
    <property type="chains" value="A=127-484"/>
</dbReference>
<dbReference type="PDB" id="6Z52">
    <property type="method" value="X-ray"/>
    <property type="resolution" value="2.12 A"/>
    <property type="chains" value="A/B=127-484"/>
</dbReference>
<dbReference type="PDB" id="6Z53">
    <property type="method" value="X-ray"/>
    <property type="resolution" value="1.65 A"/>
    <property type="chains" value="A=127-484"/>
</dbReference>
<dbReference type="PDB" id="6Z54">
    <property type="method" value="X-ray"/>
    <property type="resolution" value="1.73 A"/>
    <property type="chains" value="A=127-484"/>
</dbReference>
<dbReference type="PDB" id="6Z55">
    <property type="method" value="X-ray"/>
    <property type="resolution" value="1.70 A"/>
    <property type="chains" value="A/B=127-484"/>
</dbReference>
<dbReference type="PDB" id="9EZ3">
    <property type="method" value="X-ray"/>
    <property type="resolution" value="2.70 A"/>
    <property type="chains" value="A=127-484"/>
</dbReference>
<dbReference type="PDBsum" id="2EU9"/>
<dbReference type="PDBsum" id="2EXE"/>
<dbReference type="PDBsum" id="2WU6"/>
<dbReference type="PDBsum" id="2WU7"/>
<dbReference type="PDBsum" id="3RAW"/>
<dbReference type="PDBsum" id="6FT7"/>
<dbReference type="PDBsum" id="6FYP"/>
<dbReference type="PDBsum" id="6FYR"/>
<dbReference type="PDBsum" id="6KHF"/>
<dbReference type="PDBsum" id="6RCT"/>
<dbReference type="PDBsum" id="6YTW"/>
<dbReference type="PDBsum" id="6YTY"/>
<dbReference type="PDBsum" id="6YU1"/>
<dbReference type="PDBsum" id="6Z2V"/>
<dbReference type="PDBsum" id="6Z51"/>
<dbReference type="PDBsum" id="6Z52"/>
<dbReference type="PDBsum" id="6Z53"/>
<dbReference type="PDBsum" id="6Z54"/>
<dbReference type="PDBsum" id="6Z55"/>
<dbReference type="PDBsum" id="9EZ3"/>
<dbReference type="SMR" id="P49761"/>
<dbReference type="BioGRID" id="107609">
    <property type="interactions" value="234"/>
</dbReference>
<dbReference type="FunCoup" id="P49761">
    <property type="interactions" value="2597"/>
</dbReference>
<dbReference type="IntAct" id="P49761">
    <property type="interactions" value="192"/>
</dbReference>
<dbReference type="MINT" id="P49761"/>
<dbReference type="STRING" id="9606.ENSP00000378505"/>
<dbReference type="BindingDB" id="P49761"/>
<dbReference type="ChEMBL" id="CHEMBL4226"/>
<dbReference type="DrugBank" id="DB08691">
    <property type="generic name" value="ethyl 3-[(E)-2-amino-1-cyanoethenyl]-6,7-dichloro-1-methyl-1H-indole-2-carboxylate"/>
</dbReference>
<dbReference type="DrugBank" id="DB12010">
    <property type="generic name" value="Fostamatinib"/>
</dbReference>
<dbReference type="DrugBank" id="DB07664">
    <property type="generic name" value="K-00546"/>
</dbReference>
<dbReference type="DrugCentral" id="P49761"/>
<dbReference type="GuidetoPHARMACOLOGY" id="1992"/>
<dbReference type="iPTMnet" id="P49761"/>
<dbReference type="PhosphoSitePlus" id="P49761"/>
<dbReference type="BioMuta" id="CLK3"/>
<dbReference type="DMDM" id="148887358"/>
<dbReference type="CPTAC" id="non-CPTAC-6020"/>
<dbReference type="CPTAC" id="non-CPTAC-6021"/>
<dbReference type="jPOST" id="P49761"/>
<dbReference type="MassIVE" id="P49761"/>
<dbReference type="PaxDb" id="9606-ENSP00000378505"/>
<dbReference type="PeptideAtlas" id="P49761"/>
<dbReference type="ProteomicsDB" id="56097">
    <molecule id="P49761-1"/>
</dbReference>
<dbReference type="ProteomicsDB" id="56098">
    <molecule id="P49761-2"/>
</dbReference>
<dbReference type="ProteomicsDB" id="56099">
    <molecule id="P49761-3"/>
</dbReference>
<dbReference type="Pumba" id="P49761"/>
<dbReference type="Antibodypedia" id="26974">
    <property type="antibodies" value="159 antibodies from 26 providers"/>
</dbReference>
<dbReference type="DNASU" id="1198"/>
<dbReference type="Ensembl" id="ENST00000345005.8">
    <molecule id="P49761-1"/>
    <property type="protein sequence ID" value="ENSP00000344112.4"/>
    <property type="gene ID" value="ENSG00000179335.20"/>
</dbReference>
<dbReference type="Ensembl" id="ENST00000395066.9">
    <molecule id="P49761-1"/>
    <property type="protein sequence ID" value="ENSP00000378505.4"/>
    <property type="gene ID" value="ENSG00000179335.20"/>
</dbReference>
<dbReference type="Ensembl" id="ENST00000483723.5">
    <molecule id="P49761-2"/>
    <property type="protein sequence ID" value="ENSP00000431825.1"/>
    <property type="gene ID" value="ENSG00000179335.20"/>
</dbReference>
<dbReference type="GeneID" id="1198"/>
<dbReference type="KEGG" id="hsa:1198"/>
<dbReference type="MANE-Select" id="ENST00000395066.9">
    <property type="protein sequence ID" value="ENSP00000378505.4"/>
    <property type="RefSeq nucleotide sequence ID" value="NM_001130028.2"/>
    <property type="RefSeq protein sequence ID" value="NP_001123500.2"/>
</dbReference>
<dbReference type="UCSC" id="uc002ayg.4">
    <molecule id="P49761-1"/>
    <property type="organism name" value="human"/>
</dbReference>
<dbReference type="AGR" id="HGNC:2071"/>
<dbReference type="CTD" id="1198"/>
<dbReference type="DisGeNET" id="1198"/>
<dbReference type="GeneCards" id="CLK3"/>
<dbReference type="HGNC" id="HGNC:2071">
    <property type="gene designation" value="CLK3"/>
</dbReference>
<dbReference type="HPA" id="ENSG00000179335">
    <property type="expression patterns" value="Low tissue specificity"/>
</dbReference>
<dbReference type="MIM" id="602990">
    <property type="type" value="gene"/>
</dbReference>
<dbReference type="neXtProt" id="NX_P49761"/>
<dbReference type="OpenTargets" id="ENSG00000179335"/>
<dbReference type="PharmGKB" id="PA26597"/>
<dbReference type="VEuPathDB" id="HostDB:ENSG00000179335"/>
<dbReference type="eggNOG" id="KOG0671">
    <property type="taxonomic scope" value="Eukaryota"/>
</dbReference>
<dbReference type="GeneTree" id="ENSGT00940000160359"/>
<dbReference type="HOGENOM" id="CLU_000288_5_16_1"/>
<dbReference type="InParanoid" id="P49761"/>
<dbReference type="OrthoDB" id="283111at2759"/>
<dbReference type="PAN-GO" id="P49761">
    <property type="GO annotations" value="5 GO annotations based on evolutionary models"/>
</dbReference>
<dbReference type="PhylomeDB" id="P49761"/>
<dbReference type="TreeFam" id="TF101041"/>
<dbReference type="BRENDA" id="2.7.12.1">
    <property type="organism ID" value="2681"/>
</dbReference>
<dbReference type="PathwayCommons" id="P49761"/>
<dbReference type="SignaLink" id="P49761"/>
<dbReference type="SIGNOR" id="P49761"/>
<dbReference type="BioGRID-ORCS" id="1198">
    <property type="hits" value="31 hits in 1188 CRISPR screens"/>
</dbReference>
<dbReference type="ChiTaRS" id="CLK3">
    <property type="organism name" value="human"/>
</dbReference>
<dbReference type="EvolutionaryTrace" id="P49761"/>
<dbReference type="GeneWiki" id="CLK3_(gene)"/>
<dbReference type="GenomeRNAi" id="1198"/>
<dbReference type="Pharos" id="P49761">
    <property type="development level" value="Tchem"/>
</dbReference>
<dbReference type="PRO" id="PR:P49761"/>
<dbReference type="Proteomes" id="UP000005640">
    <property type="component" value="Chromosome 15"/>
</dbReference>
<dbReference type="RNAct" id="P49761">
    <property type="molecule type" value="protein"/>
</dbReference>
<dbReference type="Bgee" id="ENSG00000179335">
    <property type="expression patterns" value="Expressed in lower esophagus mucosa and 193 other cell types or tissues"/>
</dbReference>
<dbReference type="ExpressionAtlas" id="P49761">
    <property type="expression patterns" value="baseline and differential"/>
</dbReference>
<dbReference type="GO" id="GO:0001669">
    <property type="term" value="C:acrosomal vesicle"/>
    <property type="evidence" value="ECO:0007669"/>
    <property type="project" value="UniProtKB-SubCell"/>
</dbReference>
<dbReference type="GO" id="GO:0045111">
    <property type="term" value="C:intermediate filament cytoskeleton"/>
    <property type="evidence" value="ECO:0000314"/>
    <property type="project" value="HPA"/>
</dbReference>
<dbReference type="GO" id="GO:0016020">
    <property type="term" value="C:membrane"/>
    <property type="evidence" value="ECO:0007005"/>
    <property type="project" value="UniProtKB"/>
</dbReference>
<dbReference type="GO" id="GO:0016607">
    <property type="term" value="C:nuclear speck"/>
    <property type="evidence" value="ECO:0007669"/>
    <property type="project" value="UniProtKB-SubCell"/>
</dbReference>
<dbReference type="GO" id="GO:0005654">
    <property type="term" value="C:nucleoplasm"/>
    <property type="evidence" value="ECO:0000314"/>
    <property type="project" value="HPA"/>
</dbReference>
<dbReference type="GO" id="GO:0005634">
    <property type="term" value="C:nucleus"/>
    <property type="evidence" value="ECO:0000314"/>
    <property type="project" value="UniProtKB"/>
</dbReference>
<dbReference type="GO" id="GO:0005524">
    <property type="term" value="F:ATP binding"/>
    <property type="evidence" value="ECO:0007669"/>
    <property type="project" value="UniProtKB-KW"/>
</dbReference>
<dbReference type="GO" id="GO:0042802">
    <property type="term" value="F:identical protein binding"/>
    <property type="evidence" value="ECO:0000353"/>
    <property type="project" value="IntAct"/>
</dbReference>
<dbReference type="GO" id="GO:0106310">
    <property type="term" value="F:protein serine kinase activity"/>
    <property type="evidence" value="ECO:0007669"/>
    <property type="project" value="RHEA"/>
</dbReference>
<dbReference type="GO" id="GO:0004674">
    <property type="term" value="F:protein serine/threonine kinase activity"/>
    <property type="evidence" value="ECO:0000250"/>
    <property type="project" value="UniProtKB"/>
</dbReference>
<dbReference type="GO" id="GO:0004712">
    <property type="term" value="F:protein serine/threonine/tyrosine kinase activity"/>
    <property type="evidence" value="ECO:0007669"/>
    <property type="project" value="UniProtKB-EC"/>
</dbReference>
<dbReference type="GO" id="GO:0004713">
    <property type="term" value="F:protein tyrosine kinase activity"/>
    <property type="evidence" value="ECO:0000318"/>
    <property type="project" value="GO_Central"/>
</dbReference>
<dbReference type="GO" id="GO:0003723">
    <property type="term" value="F:RNA binding"/>
    <property type="evidence" value="ECO:0007005"/>
    <property type="project" value="UniProtKB"/>
</dbReference>
<dbReference type="GO" id="GO:0006468">
    <property type="term" value="P:protein phosphorylation"/>
    <property type="evidence" value="ECO:0000314"/>
    <property type="project" value="UniProtKB"/>
</dbReference>
<dbReference type="GO" id="GO:0043484">
    <property type="term" value="P:regulation of RNA splicing"/>
    <property type="evidence" value="ECO:0000314"/>
    <property type="project" value="UniProtKB"/>
</dbReference>
<dbReference type="CDD" id="cd14214">
    <property type="entry name" value="PKc_CLK3"/>
    <property type="match status" value="1"/>
</dbReference>
<dbReference type="FunFam" id="1.10.510.10:FF:000145">
    <property type="entry name" value="Dual specificity protein kinase CLK2"/>
    <property type="match status" value="1"/>
</dbReference>
<dbReference type="FunFam" id="3.30.200.20:FF:000061">
    <property type="entry name" value="Dual specificity protein kinase CLK2"/>
    <property type="match status" value="1"/>
</dbReference>
<dbReference type="Gene3D" id="3.30.200.20">
    <property type="entry name" value="Phosphorylase Kinase, domain 1"/>
    <property type="match status" value="1"/>
</dbReference>
<dbReference type="Gene3D" id="1.10.510.10">
    <property type="entry name" value="Transferase(Phosphotransferase) domain 1"/>
    <property type="match status" value="1"/>
</dbReference>
<dbReference type="InterPro" id="IPR051175">
    <property type="entry name" value="CLK_kinases"/>
</dbReference>
<dbReference type="InterPro" id="IPR011009">
    <property type="entry name" value="Kinase-like_dom_sf"/>
</dbReference>
<dbReference type="InterPro" id="IPR000719">
    <property type="entry name" value="Prot_kinase_dom"/>
</dbReference>
<dbReference type="InterPro" id="IPR017441">
    <property type="entry name" value="Protein_kinase_ATP_BS"/>
</dbReference>
<dbReference type="InterPro" id="IPR008271">
    <property type="entry name" value="Ser/Thr_kinase_AS"/>
</dbReference>
<dbReference type="PANTHER" id="PTHR45646:SF10">
    <property type="entry name" value="DUAL SPECIFICITY PROTEIN KINASE CLK3"/>
    <property type="match status" value="1"/>
</dbReference>
<dbReference type="PANTHER" id="PTHR45646">
    <property type="entry name" value="SERINE/THREONINE-PROTEIN KINASE DOA-RELATED"/>
    <property type="match status" value="1"/>
</dbReference>
<dbReference type="Pfam" id="PF00069">
    <property type="entry name" value="Pkinase"/>
    <property type="match status" value="1"/>
</dbReference>
<dbReference type="SMART" id="SM00220">
    <property type="entry name" value="S_TKc"/>
    <property type="match status" value="1"/>
</dbReference>
<dbReference type="SUPFAM" id="SSF56112">
    <property type="entry name" value="Protein kinase-like (PK-like)"/>
    <property type="match status" value="1"/>
</dbReference>
<dbReference type="PROSITE" id="PS00107">
    <property type="entry name" value="PROTEIN_KINASE_ATP"/>
    <property type="match status" value="1"/>
</dbReference>
<dbReference type="PROSITE" id="PS50011">
    <property type="entry name" value="PROTEIN_KINASE_DOM"/>
    <property type="match status" value="1"/>
</dbReference>
<dbReference type="PROSITE" id="PS00108">
    <property type="entry name" value="PROTEIN_KINASE_ST"/>
    <property type="match status" value="1"/>
</dbReference>
<comment type="function">
    <text evidence="6 7">Dual specificity kinase acting on both serine/threonine and tyrosine-containing substrates. Phosphorylates serine- and arginine-rich (SR) proteins of the spliceosomal complex. May be a constituent of a network of regulatory mechanisms that enable SR proteins to control RNA splicing and can cause redistribution of SR proteins from speckles to a diffuse nucleoplasmic distribution. Phosphorylates SRSF1 and SRSF3. Regulates the alternative splicing of tissue factor (F3) pre-mRNA in endothelial cells.</text>
</comment>
<comment type="catalytic activity">
    <reaction>
        <text>L-seryl-[protein] + ATP = O-phospho-L-seryl-[protein] + ADP + H(+)</text>
        <dbReference type="Rhea" id="RHEA:17989"/>
        <dbReference type="Rhea" id="RHEA-COMP:9863"/>
        <dbReference type="Rhea" id="RHEA-COMP:11604"/>
        <dbReference type="ChEBI" id="CHEBI:15378"/>
        <dbReference type="ChEBI" id="CHEBI:29999"/>
        <dbReference type="ChEBI" id="CHEBI:30616"/>
        <dbReference type="ChEBI" id="CHEBI:83421"/>
        <dbReference type="ChEBI" id="CHEBI:456216"/>
        <dbReference type="EC" id="2.7.12.1"/>
    </reaction>
</comment>
<comment type="catalytic activity">
    <reaction>
        <text>L-threonyl-[protein] + ATP = O-phospho-L-threonyl-[protein] + ADP + H(+)</text>
        <dbReference type="Rhea" id="RHEA:46608"/>
        <dbReference type="Rhea" id="RHEA-COMP:11060"/>
        <dbReference type="Rhea" id="RHEA-COMP:11605"/>
        <dbReference type="ChEBI" id="CHEBI:15378"/>
        <dbReference type="ChEBI" id="CHEBI:30013"/>
        <dbReference type="ChEBI" id="CHEBI:30616"/>
        <dbReference type="ChEBI" id="CHEBI:61977"/>
        <dbReference type="ChEBI" id="CHEBI:456216"/>
        <dbReference type="EC" id="2.7.12.1"/>
    </reaction>
</comment>
<comment type="catalytic activity">
    <reaction>
        <text>L-tyrosyl-[protein] + ATP = O-phospho-L-tyrosyl-[protein] + ADP + H(+)</text>
        <dbReference type="Rhea" id="RHEA:10596"/>
        <dbReference type="Rhea" id="RHEA-COMP:10136"/>
        <dbReference type="Rhea" id="RHEA-COMP:20101"/>
        <dbReference type="ChEBI" id="CHEBI:15378"/>
        <dbReference type="ChEBI" id="CHEBI:30616"/>
        <dbReference type="ChEBI" id="CHEBI:46858"/>
        <dbReference type="ChEBI" id="CHEBI:61978"/>
        <dbReference type="ChEBI" id="CHEBI:456216"/>
        <dbReference type="EC" id="2.7.12.1"/>
    </reaction>
</comment>
<comment type="activity regulation">
    <text>Leucettine L41 inhibits its kinase activity and affects the regulation of alternative splicing mediated by phosphorylation of SR proteins.</text>
</comment>
<comment type="interaction">
    <interactant intactId="EBI-745579">
        <id>P49761</id>
    </interactant>
    <interactant intactId="EBI-2555370">
        <id>Q8IWX8</id>
        <label>CHERP</label>
    </interactant>
    <organismsDiffer>false</organismsDiffer>
    <experiments>3</experiments>
</comment>
<comment type="interaction">
    <interactant intactId="EBI-745579">
        <id>P49761</id>
    </interactant>
    <interactant intactId="EBI-751069">
        <id>Q8N2M8</id>
        <label>CLASRP</label>
    </interactant>
    <organismsDiffer>false</organismsDiffer>
    <experiments>4</experiments>
</comment>
<comment type="interaction">
    <interactant intactId="EBI-745579">
        <id>P49761</id>
    </interactant>
    <interactant intactId="EBI-750020">
        <id>P49760</id>
        <label>CLK2</label>
    </interactant>
    <organismsDiffer>false</organismsDiffer>
    <experiments>15</experiments>
</comment>
<comment type="interaction">
    <interactant intactId="EBI-745579">
        <id>P49761</id>
    </interactant>
    <interactant intactId="EBI-745579">
        <id>P49761</id>
        <label>CLK3</label>
    </interactant>
    <organismsDiffer>false</organismsDiffer>
    <experiments>6</experiments>
</comment>
<comment type="interaction">
    <interactant intactId="EBI-745579">
        <id>P49761</id>
    </interactant>
    <interactant intactId="EBI-742054">
        <id>Q96D03</id>
        <label>DDIT4L</label>
    </interactant>
    <organismsDiffer>false</organismsDiffer>
    <experiments>3</experiments>
</comment>
<comment type="interaction">
    <interactant intactId="EBI-745579">
        <id>P49761</id>
    </interactant>
    <interactant intactId="EBI-741308">
        <id>P17509</id>
        <label>HOXB6</label>
    </interactant>
    <organismsDiffer>false</organismsDiffer>
    <experiments>6</experiments>
</comment>
<comment type="interaction">
    <interactant intactId="EBI-745579">
        <id>P49761</id>
    </interactant>
    <interactant intactId="EBI-1248457">
        <id>P09629</id>
        <label>HOXB7</label>
    </interactant>
    <organismsDiffer>false</organismsDiffer>
    <experiments>6</experiments>
</comment>
<comment type="interaction">
    <interactant intactId="EBI-745579">
        <id>P49761</id>
    </interactant>
    <interactant intactId="EBI-3923226">
        <id>P09017</id>
        <label>HOXC4</label>
    </interactant>
    <organismsDiffer>false</organismsDiffer>
    <experiments>3</experiments>
</comment>
<comment type="interaction">
    <interactant intactId="EBI-745579">
        <id>P49761</id>
    </interactant>
    <interactant intactId="EBI-352572">
        <id>P08238</id>
        <label>HSP90AB1</label>
    </interactant>
    <organismsDiffer>false</organismsDiffer>
    <experiments>2</experiments>
</comment>
<comment type="interaction">
    <interactant intactId="EBI-745579">
        <id>P49761</id>
    </interactant>
    <interactant intactId="EBI-6509505">
        <id>Q0VD86</id>
        <label>INCA1</label>
    </interactant>
    <organismsDiffer>false</organismsDiffer>
    <experiments>3</experiments>
</comment>
<comment type="interaction">
    <interactant intactId="EBI-745579">
        <id>P49761</id>
    </interactant>
    <interactant intactId="EBI-739832">
        <id>Q8TBB1</id>
        <label>LNX1</label>
    </interactant>
    <organismsDiffer>false</organismsDiffer>
    <experiments>3</experiments>
</comment>
<comment type="interaction">
    <interactant intactId="EBI-745579">
        <id>P49761</id>
    </interactant>
    <interactant intactId="EBI-11423380">
        <id>Q5M9Q1</id>
        <label>NKAPL</label>
    </interactant>
    <organismsDiffer>false</organismsDiffer>
    <experiments>3</experiments>
</comment>
<comment type="interaction">
    <interactant intactId="EBI-745579">
        <id>P49761</id>
    </interactant>
    <interactant intactId="EBI-398874">
        <id>Q9UBU9</id>
        <label>NXF1</label>
    </interactant>
    <organismsDiffer>false</organismsDiffer>
    <experiments>3</experiments>
</comment>
<comment type="interaction">
    <interactant intactId="EBI-745579">
        <id>P49761</id>
    </interactant>
    <interactant intactId="EBI-10211452">
        <id>P29728</id>
        <label>OAS2</label>
    </interactant>
    <organismsDiffer>false</organismsDiffer>
    <experiments>4</experiments>
</comment>
<comment type="interaction">
    <interactant intactId="EBI-745579">
        <id>P49761</id>
    </interactant>
    <interactant intactId="EBI-12270678">
        <id>P29728-2</id>
        <label>OAS2</label>
    </interactant>
    <organismsDiffer>false</organismsDiffer>
    <experiments>5</experiments>
</comment>
<comment type="interaction">
    <interactant intactId="EBI-745579">
        <id>P49761</id>
    </interactant>
    <interactant intactId="EBI-743526">
        <id>P38159</id>
        <label>RBMX</label>
    </interactant>
    <organismsDiffer>false</organismsDiffer>
    <experiments>3</experiments>
</comment>
<comment type="interaction">
    <interactant intactId="EBI-745579">
        <id>P49761</id>
    </interactant>
    <interactant intactId="EBI-8638511">
        <id>P0DJD3</id>
        <label>RBMY1A1</label>
    </interactant>
    <organismsDiffer>false</organismsDiffer>
    <experiments>3</experiments>
</comment>
<comment type="interaction">
    <interactant intactId="EBI-745579">
        <id>P49761</id>
    </interactant>
    <interactant intactId="EBI-8642021">
        <id>Q15415</id>
        <label>RBMY1J</label>
    </interactant>
    <organismsDiffer>false</organismsDiffer>
    <experiments>3</experiments>
</comment>
<comment type="interaction">
    <interactant intactId="EBI-745579">
        <id>P49761</id>
    </interactant>
    <interactant intactId="EBI-373337">
        <id>O76064</id>
        <label>RNF8</label>
    </interactant>
    <organismsDiffer>false</organismsDiffer>
    <experiments>3</experiments>
</comment>
<comment type="interaction">
    <interactant intactId="EBI-745579">
        <id>P49761</id>
    </interactant>
    <interactant intactId="EBI-395959">
        <id>Q15287</id>
        <label>RNPS1</label>
    </interactant>
    <organismsDiffer>false</organismsDiffer>
    <experiments>5</experiments>
</comment>
<comment type="interaction">
    <interactant intactId="EBI-745579">
        <id>P49761</id>
    </interactant>
    <interactant intactId="EBI-745604">
        <id>Q9BUV0</id>
        <label>RSRP1</label>
    </interactant>
    <organismsDiffer>false</organismsDiffer>
    <experiments>11</experiments>
</comment>
<comment type="interaction">
    <interactant intactId="EBI-745579">
        <id>P49761</id>
    </interactant>
    <interactant intactId="EBI-1642180">
        <id>P10523</id>
        <label>SAG</label>
    </interactant>
    <organismsDiffer>false</organismsDiffer>
    <experiments>3</experiments>
</comment>
<comment type="interaction">
    <interactant intactId="EBI-745579">
        <id>P49761</id>
    </interactant>
    <interactant intactId="EBI-727004">
        <id>O00560</id>
        <label>SDCBP</label>
    </interactant>
    <organismsDiffer>false</organismsDiffer>
    <experiments>6</experiments>
</comment>
<comment type="interaction">
    <interactant intactId="EBI-745579">
        <id>P49761</id>
    </interactant>
    <interactant intactId="EBI-19952306">
        <id>O14492-2</id>
        <label>SH2B2</label>
    </interactant>
    <organismsDiffer>false</organismsDiffer>
    <experiments>3</experiments>
</comment>
<comment type="interaction">
    <interactant intactId="EBI-745579">
        <id>P49761</id>
    </interactant>
    <interactant intactId="EBI-749336">
        <id>Q8TAD8</id>
        <label>SNIP1</label>
    </interactant>
    <organismsDiffer>false</organismsDiffer>
    <experiments>4</experiments>
</comment>
<comment type="interaction">
    <interactant intactId="EBI-745579">
        <id>P49761</id>
    </interactant>
    <interactant intactId="EBI-12938570">
        <id>Q16560-2</id>
        <label>SNRNP35</label>
    </interactant>
    <organismsDiffer>false</organismsDiffer>
    <experiments>3</experiments>
</comment>
<comment type="interaction">
    <interactant intactId="EBI-745579">
        <id>P49761</id>
    </interactant>
    <interactant intactId="EBI-593303">
        <id>P78362</id>
        <label>SRPK2</label>
    </interactant>
    <organismsDiffer>false</organismsDiffer>
    <experiments>7</experiments>
</comment>
<comment type="interaction">
    <interactant intactId="EBI-745579">
        <id>P49761</id>
    </interactant>
    <interactant intactId="EBI-353655">
        <id>O75494</id>
        <label>SRSF10</label>
    </interactant>
    <organismsDiffer>false</organismsDiffer>
    <experiments>5</experiments>
</comment>
<comment type="interaction">
    <interactant intactId="EBI-745579">
        <id>P49761</id>
    </interactant>
    <interactant intactId="EBI-372557">
        <id>P84103</id>
        <label>SRSF3</label>
    </interactant>
    <organismsDiffer>false</organismsDiffer>
    <experiments>4</experiments>
</comment>
<comment type="interaction">
    <interactant intactId="EBI-745579">
        <id>P49761</id>
    </interactant>
    <interactant intactId="EBI-10976394">
        <id>Q9BRL6-2</id>
        <label>SRSF8</label>
    </interactant>
    <organismsDiffer>false</organismsDiffer>
    <experiments>3</experiments>
</comment>
<comment type="interaction">
    <interactant intactId="EBI-745579">
        <id>P49761</id>
    </interactant>
    <interactant intactId="EBI-349968">
        <id>O43463</id>
        <label>SUV39H1</label>
    </interactant>
    <organismsDiffer>false</organismsDiffer>
    <experiments>2</experiments>
</comment>
<comment type="interaction">
    <interactant intactId="EBI-745579">
        <id>P49761</id>
    </interactant>
    <interactant intactId="EBI-717399">
        <id>Q9BSI4</id>
        <label>TINF2</label>
    </interactant>
    <organismsDiffer>false</organismsDiffer>
    <experiments>2</experiments>
</comment>
<comment type="interaction">
    <interactant intactId="EBI-745579">
        <id>P49761</id>
    </interactant>
    <interactant intactId="EBI-725485">
        <id>P62995</id>
        <label>TRA2B</label>
    </interactant>
    <organismsDiffer>false</organismsDiffer>
    <experiments>10</experiments>
</comment>
<comment type="interaction">
    <interactant intactId="EBI-745579">
        <id>P49761</id>
    </interactant>
    <interactant intactId="EBI-356498">
        <id>P62258</id>
        <label>YWHAE</label>
    </interactant>
    <organismsDiffer>false</organismsDiffer>
    <experiments>2</experiments>
</comment>
<comment type="interaction">
    <interactant intactId="EBI-745579">
        <id>P49761</id>
    </interactant>
    <interactant intactId="EBI-744493">
        <id>O14978</id>
        <label>ZNF263</label>
    </interactant>
    <organismsDiffer>false</organismsDiffer>
    <experiments>3</experiments>
</comment>
<comment type="interaction">
    <interactant intactId="EBI-745579">
        <id>P49761</id>
    </interactant>
    <interactant intactId="EBI-751409">
        <id>Q8WTR7</id>
        <label>ZNF473</label>
    </interactant>
    <organismsDiffer>false</organismsDiffer>
    <experiments>3</experiments>
</comment>
<comment type="interaction">
    <interactant intactId="EBI-745579">
        <id>P49761</id>
    </interactant>
    <interactant intactId="EBI-11975599">
        <id>Q9ULD5</id>
        <label>ZNF777</label>
    </interactant>
    <organismsDiffer>false</organismsDiffer>
    <experiments>3</experiments>
</comment>
<comment type="interaction">
    <interactant intactId="EBI-745579">
        <id>P49761</id>
    </interactant>
    <interactant intactId="EBI-5667516">
        <id>Q9Y2P0</id>
        <label>ZNF835</label>
    </interactant>
    <organismsDiffer>false</organismsDiffer>
    <experiments>5</experiments>
</comment>
<comment type="subcellular location">
    <molecule>Isoform 1</molecule>
    <subcellularLocation>
        <location>Nucleus</location>
    </subcellularLocation>
    <subcellularLocation>
        <location evidence="1">Cytoplasm</location>
    </subcellularLocation>
    <subcellularLocation>
        <location evidence="1">Cytoplasmic vesicle</location>
        <location evidence="1">Secretory vesicle</location>
        <location evidence="1">Acrosome</location>
    </subcellularLocation>
</comment>
<comment type="subcellular location">
    <molecule>Isoform 2</molecule>
    <subcellularLocation>
        <location>Nucleus speckle</location>
    </subcellularLocation>
    <text>Co-localizes with serine- and arginine-rich (SR) proteins in the nuclear speckles.</text>
</comment>
<comment type="alternative products">
    <event type="alternative splicing"/>
    <isoform>
        <id>P49761-1</id>
        <name>1</name>
        <name>Long</name>
        <sequence type="displayed"/>
    </isoform>
    <isoform>
        <id>P49761-2</id>
        <name>2</name>
        <name>Short</name>
        <sequence type="described" ref="VSP_062381 VSP_062382"/>
    </isoform>
    <isoform>
        <id>P49761-3</id>
        <name>3</name>
        <sequence type="described" ref="VSP_062383"/>
    </isoform>
</comment>
<comment type="tissue specificity">
    <text evidence="6">Endothelial cells.</text>
</comment>
<comment type="PTM">
    <text evidence="1">Autophosphorylates on all three types of residues.</text>
</comment>
<comment type="miscellaneous">
    <molecule>Isoform 2</molecule>
    <text evidence="8">Lacks the kinase domain. May be produced at very low levels due to a premature stop codon in the mRNA, leading to nonsense-mediated mRNA decay.</text>
</comment>
<comment type="similarity">
    <text evidence="8">Belongs to the protein kinase superfamily. CMGC Ser/Thr protein kinase family. Lammer subfamily.</text>
</comment>
<feature type="chain" id="PRO_0000085870" description="Dual specificity protein kinase CLK3">
    <location>
        <begin position="1"/>
        <end position="490"/>
    </location>
</feature>
<feature type="domain" description="Protein kinase" evidence="2">
    <location>
        <begin position="156"/>
        <end position="472"/>
    </location>
</feature>
<feature type="region of interest" description="Disordered" evidence="4">
    <location>
        <begin position="1"/>
        <end position="138"/>
    </location>
</feature>
<feature type="compositionally biased region" description="Basic and acidic residues" evidence="4">
    <location>
        <begin position="26"/>
        <end position="56"/>
    </location>
</feature>
<feature type="compositionally biased region" description="Basic and acidic residues" evidence="4">
    <location>
        <begin position="63"/>
        <end position="76"/>
    </location>
</feature>
<feature type="compositionally biased region" description="Basic residues" evidence="4">
    <location>
        <begin position="88"/>
        <end position="116"/>
    </location>
</feature>
<feature type="compositionally biased region" description="Low complexity" evidence="4">
    <location>
        <begin position="117"/>
        <end position="130"/>
    </location>
</feature>
<feature type="active site" description="Proton acceptor" evidence="2 3">
    <location>
        <position position="283"/>
    </location>
</feature>
<feature type="binding site" evidence="2">
    <location>
        <begin position="162"/>
        <end position="170"/>
    </location>
    <ligand>
        <name>ATP</name>
        <dbReference type="ChEBI" id="CHEBI:30616"/>
    </ligand>
</feature>
<feature type="binding site" evidence="2">
    <location>
        <position position="186"/>
    </location>
    <ligand>
        <name>ATP</name>
        <dbReference type="ChEBI" id="CHEBI:30616"/>
    </ligand>
</feature>
<feature type="modified residue" description="Phosphotyrosine" evidence="10">
    <location>
        <position position="7"/>
    </location>
</feature>
<feature type="modified residue" description="Phosphoserine" evidence="10 12 14 15">
    <location>
        <position position="9"/>
    </location>
</feature>
<feature type="modified residue" description="Phosphoserine" evidence="14">
    <location>
        <position position="49"/>
    </location>
</feature>
<feature type="modified residue" description="Phosphoserine" evidence="14">
    <location>
        <position position="51"/>
    </location>
</feature>
<feature type="modified residue" description="Phosphoserine" evidence="13">
    <location>
        <position position="67"/>
    </location>
</feature>
<feature type="modified residue" description="Phosphoserine" evidence="10 13">
    <location>
        <position position="76"/>
    </location>
</feature>
<feature type="modified residue" description="Phosphoserine" evidence="10 13">
    <location>
        <position position="78"/>
    </location>
</feature>
<feature type="modified residue" description="Phosphoserine" evidence="11 14">
    <location>
        <position position="135"/>
    </location>
</feature>
<feature type="splice variant" id="VSP_062381" description="In isoform 2.">
    <original>RSQQSSKRSSRSVEDDKEGHLVCRIGDWL</original>
    <variation>MRLWGTWVKAPLARWWSAWTMPEGSLRLP</variation>
    <location>
        <begin position="124"/>
        <end position="152"/>
    </location>
</feature>
<feature type="splice variant" id="VSP_062382" description="In isoform 2.">
    <location>
        <begin position="153"/>
        <end position="490"/>
    </location>
</feature>
<feature type="splice variant" id="VSP_062383" description="In isoform 3.">
    <location>
        <begin position="158"/>
        <end position="180"/>
    </location>
</feature>
<feature type="sequence variant" id="VAR_040413" description="In dbSNP:rs975796055." evidence="5">
    <original>R</original>
    <variation>C</variation>
    <location>
        <position position="338"/>
    </location>
</feature>
<feature type="sequence variant" id="VAR_045579" description="In dbSNP:rs910378995." evidence="5">
    <original>Q</original>
    <variation>R</variation>
    <location>
        <position position="459"/>
    </location>
</feature>
<feature type="sequence variant" id="VAR_045580" description="In dbSNP:rs920443187." evidence="5">
    <original>R</original>
    <variation>W</variation>
    <location>
        <position position="480"/>
    </location>
</feature>
<feature type="sequence conflict" description="In Ref. 1; AAA61484." evidence="8" ref="1">
    <original>SS</original>
    <variation>TG</variation>
    <location>
        <begin position="132"/>
        <end position="133"/>
    </location>
</feature>
<feature type="helix" evidence="17">
    <location>
        <begin position="129"/>
        <end position="134"/>
    </location>
</feature>
<feature type="strand" evidence="19">
    <location>
        <begin position="140"/>
        <end position="142"/>
    </location>
</feature>
<feature type="turn" evidence="17">
    <location>
        <begin position="153"/>
        <end position="155"/>
    </location>
</feature>
<feature type="strand" evidence="17">
    <location>
        <begin position="156"/>
        <end position="165"/>
    </location>
</feature>
<feature type="strand" evidence="17">
    <location>
        <begin position="168"/>
        <end position="175"/>
    </location>
</feature>
<feature type="helix" evidence="17">
    <location>
        <begin position="176"/>
        <end position="178"/>
    </location>
</feature>
<feature type="strand" evidence="17">
    <location>
        <begin position="182"/>
        <end position="188"/>
    </location>
</feature>
<feature type="helix" evidence="17">
    <location>
        <begin position="192"/>
        <end position="211"/>
    </location>
</feature>
<feature type="strand" evidence="18">
    <location>
        <begin position="212"/>
        <end position="215"/>
    </location>
</feature>
<feature type="strand" evidence="17">
    <location>
        <begin position="222"/>
        <end position="228"/>
    </location>
</feature>
<feature type="strand" evidence="17">
    <location>
        <begin position="231"/>
        <end position="237"/>
    </location>
</feature>
<feature type="helix" evidence="17">
    <location>
        <begin position="243"/>
        <end position="249"/>
    </location>
</feature>
<feature type="turn" evidence="17">
    <location>
        <begin position="250"/>
        <end position="252"/>
    </location>
</feature>
<feature type="helix" evidence="17">
    <location>
        <begin position="257"/>
        <end position="276"/>
    </location>
</feature>
<feature type="helix" evidence="17">
    <location>
        <begin position="286"/>
        <end position="288"/>
    </location>
</feature>
<feature type="strand" evidence="17">
    <location>
        <begin position="289"/>
        <end position="292"/>
    </location>
</feature>
<feature type="strand" evidence="17">
    <location>
        <begin position="296"/>
        <end position="300"/>
    </location>
</feature>
<feature type="turn" evidence="20">
    <location>
        <begin position="302"/>
        <end position="305"/>
    </location>
</feature>
<feature type="strand" evidence="17">
    <location>
        <begin position="308"/>
        <end position="312"/>
    </location>
</feature>
<feature type="strand" evidence="17">
    <location>
        <begin position="316"/>
        <end position="318"/>
    </location>
</feature>
<feature type="helix" evidence="16">
    <location>
        <begin position="321"/>
        <end position="323"/>
    </location>
</feature>
<feature type="strand" evidence="18">
    <location>
        <begin position="325"/>
        <end position="329"/>
    </location>
</feature>
<feature type="helix" evidence="17">
    <location>
        <begin position="338"/>
        <end position="340"/>
    </location>
</feature>
<feature type="helix" evidence="17">
    <location>
        <begin position="343"/>
        <end position="346"/>
    </location>
</feature>
<feature type="helix" evidence="17">
    <location>
        <begin position="354"/>
        <end position="369"/>
    </location>
</feature>
<feature type="helix" evidence="17">
    <location>
        <begin position="379"/>
        <end position="390"/>
    </location>
</feature>
<feature type="helix" evidence="17">
    <location>
        <begin position="395"/>
        <end position="400"/>
    </location>
</feature>
<feature type="helix" evidence="17">
    <location>
        <begin position="404"/>
        <end position="406"/>
    </location>
</feature>
<feature type="strand" evidence="19">
    <location>
        <begin position="416"/>
        <end position="418"/>
    </location>
</feature>
<feature type="helix" evidence="17">
    <location>
        <begin position="419"/>
        <end position="427"/>
    </location>
</feature>
<feature type="helix" evidence="17">
    <location>
        <begin position="431"/>
        <end position="434"/>
    </location>
</feature>
<feature type="helix" evidence="17">
    <location>
        <begin position="440"/>
        <end position="452"/>
    </location>
</feature>
<feature type="turn" evidence="17">
    <location>
        <begin position="457"/>
        <end position="459"/>
    </location>
</feature>
<feature type="helix" evidence="17">
    <location>
        <begin position="463"/>
        <end position="466"/>
    </location>
</feature>
<feature type="helix" evidence="17">
    <location>
        <begin position="470"/>
        <end position="474"/>
    </location>
</feature>
<feature type="turn" evidence="17">
    <location>
        <begin position="477"/>
        <end position="480"/>
    </location>
</feature>
<sequence>MHHCKRYRSPEPDPYLSYRWKRRRSYSREHEGRLRYPSRREPPPRRSRSRSHDRLPYQRRYRERRDSDTYRCEERSPSFGEDYYGPSRSRHRRRSRERGPYRTRKHAHHCHKRRTRSCSSASSRSQQSSKRSSRSVEDDKEGHLVCRIGDWLQERYEIVGNLGEGTFGKVVECLDHARGKSQVALKIIRNVGKYREAARLEINVLKKIKEKDKENKFLCVLMSDWFNFHGHMCIAFELLGKNTFEFLKENNFQPYPLPHVRHMAYQLCHALRFLHENQLTHTDLKPENILFVNSEFETLYNEHKSCEEKSVKNTSIRVADFGSATFDHEHHTTIVATRHYRPPEVILELGWAQPCDVWSIGCILFEYYRGFTLFQTHENREHLVMMEKILGPIPSHMIHRTRKQKYFYKGGLVWDENSSDGRYVKENCKPLKSYMLQDSLEHVQLFDLMRRMLEFDPAQRITLAEALLHPFFAGLTPEERSFHTSRNPSR</sequence>
<organism>
    <name type="scientific">Homo sapiens</name>
    <name type="common">Human</name>
    <dbReference type="NCBI Taxonomy" id="9606"/>
    <lineage>
        <taxon>Eukaryota</taxon>
        <taxon>Metazoa</taxon>
        <taxon>Chordata</taxon>
        <taxon>Craniata</taxon>
        <taxon>Vertebrata</taxon>
        <taxon>Euteleostomi</taxon>
        <taxon>Mammalia</taxon>
        <taxon>Eutheria</taxon>
        <taxon>Euarchontoglires</taxon>
        <taxon>Primates</taxon>
        <taxon>Haplorrhini</taxon>
        <taxon>Catarrhini</taxon>
        <taxon>Hominidae</taxon>
        <taxon>Homo</taxon>
    </lineage>
</organism>